<sequence length="392" mass="45110">MMAGIVACILLVFVTVITAQPQAVFLEYIQGRMGVLEERIAQWHDQSSRFSGELRDFKNQVLKMLENIEKERDSLRNEMENTNVRVNRLEREVDYIETQNPAPPCVEIDEKLSDHHGAKKKKKEKYQKITDCSDTISQVTAMKILKRFGSSAGLWTKDLAGNSDRIYVFDGAGNDTVYMYPRMKEFTLSSPTRKAAKIRLPFPWIGTGHIVYDGNLYYIRQDNEFQVIKFSLANKTIIDSAVLPIEQQVPVYGLSKFNYIDIVADEEGLWVIYATKENEKNICLAKLDPSSLSIEQMWDTPCPIENAESAFVVCGSLYVVYNTKLPSRSRIQCVFDVSGTISSENVPIVYFPKRYGSHSSMKYNPREKQIYAWDDGYQIIYKLNMKHRDELY</sequence>
<gene>
    <name type="primary">olfml3</name>
    <name type="synonym">ont1</name>
</gene>
<comment type="function">
    <text evidence="3">Secreted scaffold protein that plays an essential role in dorsoventral patterning during early development. Stabilizes axial formation by restricting chordin (CHRD) activity on the dorsal side. Acts by facilitating the association between the tolloid protease BMP1 and its substrate chordin (CHRD), leading to enhance chordin (CHRD) degradation by BMP1.</text>
</comment>
<comment type="subunit">
    <text evidence="3">Interacts (via coiled coil domain) with BMP1 and (via olfactomedin-like domain) CHRD.</text>
</comment>
<comment type="interaction">
    <interactant intactId="EBI-1997734">
        <id>B5MFE9</id>
    </interactant>
    <interactant intactId="EBI-1997775">
        <id>P98070</id>
        <label>bmp1</label>
    </interactant>
    <organismsDiffer>false</organismsDiffer>
    <experiments>3</experiments>
</comment>
<comment type="interaction">
    <interactant intactId="EBI-1997734">
        <id>B5MFE9</id>
    </interactant>
    <interactant intactId="EBI-1997746">
        <id>Q91713</id>
        <label>chrd</label>
    </interactant>
    <organismsDiffer>false</organismsDiffer>
    <experiments>6</experiments>
</comment>
<comment type="interaction">
    <interactant intactId="EBI-1997734">
        <id>B5MFE9</id>
    </interactant>
    <interactant intactId="EBI-1997734">
        <id>B5MFE9</id>
        <label>olfml3</label>
    </interactant>
    <organismsDiffer>false</organismsDiffer>
    <experiments>2</experiments>
</comment>
<comment type="subcellular location">
    <subcellularLocation>
        <location evidence="4">Secreted</location>
    </subcellularLocation>
</comment>
<comment type="similarity">
    <text evidence="4">Belongs to the OLFML3 family.</text>
</comment>
<comment type="sequence caution" evidence="4">
    <conflict type="erroneous initiation">
        <sequence resource="EMBL-CDS" id="AAH84769"/>
    </conflict>
</comment>
<accession>B5MFE9</accession>
<accession>Q5U5B5</accession>
<dbReference type="EMBL" id="AB440138">
    <property type="protein sequence ID" value="BAG71407.1"/>
    <property type="molecule type" value="mRNA"/>
</dbReference>
<dbReference type="EMBL" id="BC084769">
    <property type="protein sequence ID" value="AAH84769.1"/>
    <property type="status" value="ALT_INIT"/>
    <property type="molecule type" value="mRNA"/>
</dbReference>
<dbReference type="RefSeq" id="NP_001088445.1">
    <property type="nucleotide sequence ID" value="NM_001094976.1"/>
</dbReference>
<dbReference type="SMR" id="B5MFE9"/>
<dbReference type="IntAct" id="B5MFE9">
    <property type="interactions" value="4"/>
</dbReference>
<dbReference type="GlyCosmos" id="B5MFE9">
    <property type="glycosylation" value="2 sites, No reported glycans"/>
</dbReference>
<dbReference type="GeneID" id="495309"/>
<dbReference type="KEGG" id="xla:495309"/>
<dbReference type="AGR" id="Xenbase:XB-GENE-6022244"/>
<dbReference type="CTD" id="495309"/>
<dbReference type="Xenbase" id="XB-GENE-6022244">
    <property type="gene designation" value="olfml3.L"/>
</dbReference>
<dbReference type="OrthoDB" id="8626508at2759"/>
<dbReference type="Proteomes" id="UP000186698">
    <property type="component" value="Chromosome 2L"/>
</dbReference>
<dbReference type="Bgee" id="495309">
    <property type="expression patterns" value="Expressed in internal ear and 14 other cell types or tissues"/>
</dbReference>
<dbReference type="GO" id="GO:0005615">
    <property type="term" value="C:extracellular space"/>
    <property type="evidence" value="ECO:0000318"/>
    <property type="project" value="GO_Central"/>
</dbReference>
<dbReference type="GO" id="GO:0042802">
    <property type="term" value="F:identical protein binding"/>
    <property type="evidence" value="ECO:0000353"/>
    <property type="project" value="IntAct"/>
</dbReference>
<dbReference type="GO" id="GO:0007165">
    <property type="term" value="P:signal transduction"/>
    <property type="evidence" value="ECO:0000318"/>
    <property type="project" value="GO_Central"/>
</dbReference>
<dbReference type="InterPro" id="IPR011043">
    <property type="entry name" value="Gal_Oxase/kelch_b-propeller"/>
</dbReference>
<dbReference type="InterPro" id="IPR003112">
    <property type="entry name" value="Olfac-like_dom"/>
</dbReference>
<dbReference type="InterPro" id="IPR050605">
    <property type="entry name" value="Olfactomedin-like_domain"/>
</dbReference>
<dbReference type="PANTHER" id="PTHR23192:SF8">
    <property type="entry name" value="OLFACTOMEDIN-LIKE PROTEIN 3"/>
    <property type="match status" value="1"/>
</dbReference>
<dbReference type="PANTHER" id="PTHR23192">
    <property type="entry name" value="OLFACTOMEDIN-RELATED"/>
    <property type="match status" value="1"/>
</dbReference>
<dbReference type="Pfam" id="PF02191">
    <property type="entry name" value="OLF"/>
    <property type="match status" value="1"/>
</dbReference>
<dbReference type="SMART" id="SM00284">
    <property type="entry name" value="OLF"/>
    <property type="match status" value="1"/>
</dbReference>
<dbReference type="SUPFAM" id="SSF50965">
    <property type="entry name" value="Galactose oxidase, central domain"/>
    <property type="match status" value="1"/>
</dbReference>
<dbReference type="PROSITE" id="PS51132">
    <property type="entry name" value="OLF"/>
    <property type="match status" value="1"/>
</dbReference>
<keyword id="KW-0175">Coiled coil</keyword>
<keyword id="KW-0217">Developmental protein</keyword>
<keyword id="KW-1015">Disulfide bond</keyword>
<keyword id="KW-0325">Glycoprotein</keyword>
<keyword id="KW-1185">Reference proteome</keyword>
<keyword id="KW-0964">Secreted</keyword>
<keyword id="KW-0732">Signal</keyword>
<protein>
    <recommendedName>
        <fullName>Olfactomedin-like protein 3</fullName>
    </recommendedName>
    <alternativeName>
        <fullName>Olfactomedin-noelin-tiarin factor 1</fullName>
    </alternativeName>
</protein>
<feature type="signal peptide" evidence="1">
    <location>
        <begin position="1"/>
        <end position="19"/>
    </location>
</feature>
<feature type="chain" id="PRO_0000361565" description="Olfactomedin-like protein 3">
    <location>
        <begin position="20"/>
        <end position="392"/>
    </location>
</feature>
<feature type="domain" description="Olfactomedin-like" evidence="2">
    <location>
        <begin position="131"/>
        <end position="387"/>
    </location>
</feature>
<feature type="coiled-coil region" evidence="1">
    <location>
        <begin position="52"/>
        <end position="100"/>
    </location>
</feature>
<feature type="glycosylation site" description="N-linked (GlcNAc...) asparagine" evidence="1">
    <location>
        <position position="174"/>
    </location>
</feature>
<feature type="glycosylation site" description="N-linked (GlcNAc...) asparagine" evidence="1">
    <location>
        <position position="234"/>
    </location>
</feature>
<feature type="disulfide bond" evidence="2">
    <location>
        <begin position="132"/>
        <end position="314"/>
    </location>
</feature>
<feature type="sequence conflict" description="In Ref. 1; BAG71407." evidence="4" ref="1">
    <original>S</original>
    <variation>T</variation>
    <location>
        <position position="113"/>
    </location>
</feature>
<reference key="1">
    <citation type="journal article" date="2008" name="Cell">
        <title>Robust stability of the embryonic axial pattern requires a secreted scaffold for chordin degradation.</title>
        <authorList>
            <person name="Inomata H."/>
            <person name="Haraguchi T."/>
            <person name="Sasai Y."/>
        </authorList>
    </citation>
    <scope>NUCLEOTIDE SEQUENCE [MRNA]</scope>
    <scope>FUNCTION</scope>
    <scope>INTERACTION WITH CHRD AND BMP1</scope>
</reference>
<reference key="2">
    <citation type="submission" date="2004-10" db="EMBL/GenBank/DDBJ databases">
        <authorList>
            <consortium name="NIH - Xenopus Gene Collection (XGC) project"/>
        </authorList>
    </citation>
    <scope>NUCLEOTIDE SEQUENCE [LARGE SCALE MRNA]</scope>
    <source>
        <tissue>Kidney</tissue>
    </source>
</reference>
<evidence type="ECO:0000255" key="1"/>
<evidence type="ECO:0000255" key="2">
    <source>
        <dbReference type="PROSITE-ProRule" id="PRU00446"/>
    </source>
</evidence>
<evidence type="ECO:0000269" key="3">
    <source>
    </source>
</evidence>
<evidence type="ECO:0000305" key="4"/>
<proteinExistence type="evidence at protein level"/>
<organism>
    <name type="scientific">Xenopus laevis</name>
    <name type="common">African clawed frog</name>
    <dbReference type="NCBI Taxonomy" id="8355"/>
    <lineage>
        <taxon>Eukaryota</taxon>
        <taxon>Metazoa</taxon>
        <taxon>Chordata</taxon>
        <taxon>Craniata</taxon>
        <taxon>Vertebrata</taxon>
        <taxon>Euteleostomi</taxon>
        <taxon>Amphibia</taxon>
        <taxon>Batrachia</taxon>
        <taxon>Anura</taxon>
        <taxon>Pipoidea</taxon>
        <taxon>Pipidae</taxon>
        <taxon>Xenopodinae</taxon>
        <taxon>Xenopus</taxon>
        <taxon>Xenopus</taxon>
    </lineage>
</organism>
<name>OLFL3_XENLA</name>